<name>TIG_RENSM</name>
<keyword id="KW-0131">Cell cycle</keyword>
<keyword id="KW-0132">Cell division</keyword>
<keyword id="KW-0143">Chaperone</keyword>
<keyword id="KW-0963">Cytoplasm</keyword>
<keyword id="KW-0413">Isomerase</keyword>
<keyword id="KW-1185">Reference proteome</keyword>
<keyword id="KW-0697">Rotamase</keyword>
<sequence>MKSAVENLSPTRVKLDVEVPFEELQPSIAEAYKTIAEQVQIPGFRKGKFPNRLIDQRVGRGYVLETAINEGLNGWYQNAVAETGLRPLSRPEVEITEVPDPAATDGELKFKVEVDVRPEVELPDYAGITVEVAPAEQSDEDRQKALDDLRGRFGTLKPADRPAAKDDFITIDINAKIADEDVDSATGLSYQVGAGTMLEGLDEAVEGLSTDEEAIFDTKLVGGEHAGEAAQVTVKLTAVKVRELPEADDDFAQLASEFDTIAELREDLVKQVNQSKTVEQGVEARDKVMEKLVELIEVPIPESVIEEQLEQHFDPANAHGEEDHDTEEHRVEVRENTERAFKNEIILDAVADKEEISVSQAELIDYIVNSASQYGMDPNQFAQMLDQSGQVPMVVSEVRRRKALAHVLGLATVTDTEGAAVDLSDFVKPAVDPELEAALNEAAGVTGEDDDTEAEEERVTVSADDPGAARF</sequence>
<accession>A9WUW4</accession>
<reference key="1">
    <citation type="journal article" date="2008" name="J. Bacteriol.">
        <title>Genome sequence of the fish pathogen Renibacterium salmoninarum suggests reductive evolution away from an environmental Arthrobacter ancestor.</title>
        <authorList>
            <person name="Wiens G.D."/>
            <person name="Rockey D.D."/>
            <person name="Wu Z."/>
            <person name="Chang J."/>
            <person name="Levy R."/>
            <person name="Crane S."/>
            <person name="Chen D.S."/>
            <person name="Capri G.R."/>
            <person name="Burnett J.R."/>
            <person name="Sudheesh P.S."/>
            <person name="Schipma M.J."/>
            <person name="Burd H."/>
            <person name="Bhattacharyya A."/>
            <person name="Rhodes L.D."/>
            <person name="Kaul R."/>
            <person name="Strom M.S."/>
        </authorList>
    </citation>
    <scope>NUCLEOTIDE SEQUENCE [LARGE SCALE GENOMIC DNA]</scope>
    <source>
        <strain>ATCC 33209 / DSM 20767 / JCM 11484 / NBRC 15589 / NCIMB 2235</strain>
    </source>
</reference>
<comment type="function">
    <text evidence="1">Involved in protein export. Acts as a chaperone by maintaining the newly synthesized protein in an open conformation. Functions as a peptidyl-prolyl cis-trans isomerase.</text>
</comment>
<comment type="catalytic activity">
    <reaction evidence="1">
        <text>[protein]-peptidylproline (omega=180) = [protein]-peptidylproline (omega=0)</text>
        <dbReference type="Rhea" id="RHEA:16237"/>
        <dbReference type="Rhea" id="RHEA-COMP:10747"/>
        <dbReference type="Rhea" id="RHEA-COMP:10748"/>
        <dbReference type="ChEBI" id="CHEBI:83833"/>
        <dbReference type="ChEBI" id="CHEBI:83834"/>
        <dbReference type="EC" id="5.2.1.8"/>
    </reaction>
</comment>
<comment type="subcellular location">
    <subcellularLocation>
        <location>Cytoplasm</location>
    </subcellularLocation>
    <text evidence="1">About half TF is bound to the ribosome near the polypeptide exit tunnel while the other half is free in the cytoplasm.</text>
</comment>
<comment type="domain">
    <text evidence="1">Consists of 3 domains; the N-terminus binds the ribosome, the middle domain has PPIase activity, while the C-terminus has intrinsic chaperone activity on its own.</text>
</comment>
<comment type="similarity">
    <text evidence="1">Belongs to the FKBP-type PPIase family. Tig subfamily.</text>
</comment>
<proteinExistence type="inferred from homology"/>
<organism>
    <name type="scientific">Renibacterium salmoninarum (strain ATCC 33209 / DSM 20767 / JCM 11484 / NBRC 15589 / NCIMB 2235)</name>
    <dbReference type="NCBI Taxonomy" id="288705"/>
    <lineage>
        <taxon>Bacteria</taxon>
        <taxon>Bacillati</taxon>
        <taxon>Actinomycetota</taxon>
        <taxon>Actinomycetes</taxon>
        <taxon>Micrococcales</taxon>
        <taxon>Micrococcaceae</taxon>
        <taxon>Renibacterium</taxon>
    </lineage>
</organism>
<gene>
    <name evidence="1" type="primary">tig</name>
    <name type="ordered locus">RSal33209_3269</name>
</gene>
<dbReference type="EC" id="5.2.1.8" evidence="1"/>
<dbReference type="EMBL" id="CP000910">
    <property type="protein sequence ID" value="ABY24985.1"/>
    <property type="molecule type" value="Genomic_DNA"/>
</dbReference>
<dbReference type="RefSeq" id="WP_012246625.1">
    <property type="nucleotide sequence ID" value="NC_010168.1"/>
</dbReference>
<dbReference type="SMR" id="A9WUW4"/>
<dbReference type="STRING" id="288705.RSal33209_3269"/>
<dbReference type="KEGG" id="rsa:RSal33209_3269"/>
<dbReference type="eggNOG" id="COG0544">
    <property type="taxonomic scope" value="Bacteria"/>
</dbReference>
<dbReference type="HOGENOM" id="CLU_033058_3_0_11"/>
<dbReference type="Proteomes" id="UP000002007">
    <property type="component" value="Chromosome"/>
</dbReference>
<dbReference type="GO" id="GO:0005737">
    <property type="term" value="C:cytoplasm"/>
    <property type="evidence" value="ECO:0007669"/>
    <property type="project" value="UniProtKB-SubCell"/>
</dbReference>
<dbReference type="GO" id="GO:0003755">
    <property type="term" value="F:peptidyl-prolyl cis-trans isomerase activity"/>
    <property type="evidence" value="ECO:0007669"/>
    <property type="project" value="UniProtKB-UniRule"/>
</dbReference>
<dbReference type="GO" id="GO:0044183">
    <property type="term" value="F:protein folding chaperone"/>
    <property type="evidence" value="ECO:0007669"/>
    <property type="project" value="TreeGrafter"/>
</dbReference>
<dbReference type="GO" id="GO:0043022">
    <property type="term" value="F:ribosome binding"/>
    <property type="evidence" value="ECO:0007669"/>
    <property type="project" value="TreeGrafter"/>
</dbReference>
<dbReference type="GO" id="GO:0051083">
    <property type="term" value="P:'de novo' cotranslational protein folding"/>
    <property type="evidence" value="ECO:0007669"/>
    <property type="project" value="TreeGrafter"/>
</dbReference>
<dbReference type="GO" id="GO:0051301">
    <property type="term" value="P:cell division"/>
    <property type="evidence" value="ECO:0007669"/>
    <property type="project" value="UniProtKB-KW"/>
</dbReference>
<dbReference type="GO" id="GO:0061077">
    <property type="term" value="P:chaperone-mediated protein folding"/>
    <property type="evidence" value="ECO:0007669"/>
    <property type="project" value="TreeGrafter"/>
</dbReference>
<dbReference type="GO" id="GO:0015031">
    <property type="term" value="P:protein transport"/>
    <property type="evidence" value="ECO:0007669"/>
    <property type="project" value="UniProtKB-UniRule"/>
</dbReference>
<dbReference type="GO" id="GO:0043335">
    <property type="term" value="P:protein unfolding"/>
    <property type="evidence" value="ECO:0007669"/>
    <property type="project" value="TreeGrafter"/>
</dbReference>
<dbReference type="Gene3D" id="3.10.50.40">
    <property type="match status" value="1"/>
</dbReference>
<dbReference type="Gene3D" id="3.30.70.1050">
    <property type="entry name" value="Trigger factor ribosome-binding domain"/>
    <property type="match status" value="1"/>
</dbReference>
<dbReference type="Gene3D" id="1.10.3120.10">
    <property type="entry name" value="Trigger factor, C-terminal domain"/>
    <property type="match status" value="1"/>
</dbReference>
<dbReference type="HAMAP" id="MF_00303">
    <property type="entry name" value="Trigger_factor_Tig"/>
    <property type="match status" value="1"/>
</dbReference>
<dbReference type="InterPro" id="IPR046357">
    <property type="entry name" value="PPIase_dom_sf"/>
</dbReference>
<dbReference type="InterPro" id="IPR005215">
    <property type="entry name" value="Trig_fac"/>
</dbReference>
<dbReference type="InterPro" id="IPR008880">
    <property type="entry name" value="Trigger_fac_C"/>
</dbReference>
<dbReference type="InterPro" id="IPR037041">
    <property type="entry name" value="Trigger_fac_C_sf"/>
</dbReference>
<dbReference type="InterPro" id="IPR008881">
    <property type="entry name" value="Trigger_fac_ribosome-bd_bac"/>
</dbReference>
<dbReference type="InterPro" id="IPR036611">
    <property type="entry name" value="Trigger_fac_ribosome-bd_sf"/>
</dbReference>
<dbReference type="InterPro" id="IPR027304">
    <property type="entry name" value="Trigger_fact/SurA_dom_sf"/>
</dbReference>
<dbReference type="NCBIfam" id="TIGR00115">
    <property type="entry name" value="tig"/>
    <property type="match status" value="1"/>
</dbReference>
<dbReference type="PANTHER" id="PTHR30560">
    <property type="entry name" value="TRIGGER FACTOR CHAPERONE AND PEPTIDYL-PROLYL CIS/TRANS ISOMERASE"/>
    <property type="match status" value="1"/>
</dbReference>
<dbReference type="PANTHER" id="PTHR30560:SF3">
    <property type="entry name" value="TRIGGER FACTOR-LIKE PROTEIN TIG, CHLOROPLASTIC"/>
    <property type="match status" value="1"/>
</dbReference>
<dbReference type="Pfam" id="PF05698">
    <property type="entry name" value="Trigger_C"/>
    <property type="match status" value="1"/>
</dbReference>
<dbReference type="Pfam" id="PF05697">
    <property type="entry name" value="Trigger_N"/>
    <property type="match status" value="1"/>
</dbReference>
<dbReference type="PIRSF" id="PIRSF003095">
    <property type="entry name" value="Trigger_factor"/>
    <property type="match status" value="1"/>
</dbReference>
<dbReference type="SUPFAM" id="SSF54534">
    <property type="entry name" value="FKBP-like"/>
    <property type="match status" value="1"/>
</dbReference>
<dbReference type="SUPFAM" id="SSF109998">
    <property type="entry name" value="Triger factor/SurA peptide-binding domain-like"/>
    <property type="match status" value="1"/>
</dbReference>
<dbReference type="SUPFAM" id="SSF102735">
    <property type="entry name" value="Trigger factor ribosome-binding domain"/>
    <property type="match status" value="1"/>
</dbReference>
<evidence type="ECO:0000255" key="1">
    <source>
        <dbReference type="HAMAP-Rule" id="MF_00303"/>
    </source>
</evidence>
<evidence type="ECO:0000256" key="2">
    <source>
        <dbReference type="SAM" id="MobiDB-lite"/>
    </source>
</evidence>
<protein>
    <recommendedName>
        <fullName evidence="1">Trigger factor</fullName>
        <shortName evidence="1">TF</shortName>
        <ecNumber evidence="1">5.2.1.8</ecNumber>
    </recommendedName>
    <alternativeName>
        <fullName evidence="1">PPIase</fullName>
    </alternativeName>
</protein>
<feature type="chain" id="PRO_1000079051" description="Trigger factor">
    <location>
        <begin position="1"/>
        <end position="471"/>
    </location>
</feature>
<feature type="domain" description="PPIase FKBP-type" evidence="1">
    <location>
        <begin position="166"/>
        <end position="245"/>
    </location>
</feature>
<feature type="region of interest" description="Disordered" evidence="2">
    <location>
        <begin position="442"/>
        <end position="471"/>
    </location>
</feature>
<feature type="compositionally biased region" description="Acidic residues" evidence="2">
    <location>
        <begin position="447"/>
        <end position="456"/>
    </location>
</feature>